<accession>P0DJW4</accession>
<organismHost>
    <name type="scientific">Aves</name>
    <dbReference type="NCBI Taxonomy" id="8782"/>
</organismHost>
<organismHost>
    <name type="scientific">Homo sapiens</name>
    <name type="common">Human</name>
    <dbReference type="NCBI Taxonomy" id="9606"/>
</organismHost>
<organismHost>
    <name type="scientific">Sus scrofa</name>
    <name type="common">Pig</name>
    <dbReference type="NCBI Taxonomy" id="9823"/>
</organismHost>
<evidence type="ECO:0000250" key="1">
    <source>
        <dbReference type="UniProtKB" id="P0CK64"/>
    </source>
</evidence>
<evidence type="ECO:0000250" key="2">
    <source>
        <dbReference type="UniProtKB" id="P0CK68"/>
    </source>
</evidence>
<evidence type="ECO:0000250" key="3">
    <source>
        <dbReference type="UniProtKB" id="P0DJW8"/>
    </source>
</evidence>
<evidence type="ECO:0000250" key="4">
    <source>
        <dbReference type="UniProtKB" id="P0DXO5"/>
    </source>
</evidence>
<evidence type="ECO:0000305" key="5"/>
<keyword id="KW-1132">Decay of host mRNAs by virus</keyword>
<keyword id="KW-1262">Eukaryotic host gene expression shutoff by virus</keyword>
<keyword id="KW-1035">Host cytoplasm</keyword>
<keyword id="KW-1190">Host gene expression shutoff by virus</keyword>
<keyword id="KW-1192">Host mRNA suppression by virus</keyword>
<keyword id="KW-1048">Host nucleus</keyword>
<keyword id="KW-0945">Host-virus interaction</keyword>
<keyword id="KW-0688">Ribosomal frameshifting</keyword>
<organism>
    <name type="scientific">Influenza A virus (strain A/USA:Memphis/10/1996 H1N1)</name>
    <dbReference type="NCBI Taxonomy" id="416730"/>
    <lineage>
        <taxon>Viruses</taxon>
        <taxon>Riboviria</taxon>
        <taxon>Orthornavirae</taxon>
        <taxon>Negarnaviricota</taxon>
        <taxon>Polyploviricotina</taxon>
        <taxon>Insthoviricetes</taxon>
        <taxon>Articulavirales</taxon>
        <taxon>Orthomyxoviridae</taxon>
        <taxon>Alphainfluenzavirus</taxon>
        <taxon>Alphainfluenzavirus influenzae</taxon>
        <taxon>Influenza A virus</taxon>
    </lineage>
</organism>
<name>PAX_I96A2</name>
<sequence length="252" mass="29425">MEDFVRQCFNPMIVELAEKAMKEYGEDLKIETNKFAAICTHLEVCFMYSDFHFINEQGESIIVEPEDPNALLKHRFEIIEGRDRTMAWTVVNSICNTTGAEKPKFLPDLYDYKENRFIEIGVTRREVHIYYLEKANKIKSEKTHIHIFSFTGEEMATKADYTLDEESRARIKTRLFTIRQEMASRGLWDSFVSPREAKKQLKKDLKSQEQCAGSLTKASRRTSPALRILEPMWMDSNRTATLRASFLKCPKK</sequence>
<feature type="chain" id="PRO_0000419427" description="Protein PA-X">
    <location>
        <begin position="1"/>
        <end position="252"/>
    </location>
</feature>
<feature type="active site" evidence="2">
    <location>
        <position position="80"/>
    </location>
</feature>
<feature type="active site" evidence="2">
    <location>
        <position position="108"/>
    </location>
</feature>
<feature type="site" description="Important for efficient shutoff activity and nuclear localization" evidence="4">
    <location>
        <position position="195"/>
    </location>
</feature>
<feature type="site" description="Important for efficient shutoff activity and nuclear localization" evidence="4">
    <location>
        <position position="198"/>
    </location>
</feature>
<feature type="site" description="Important for efficient shutoff activity and nuclear localization" evidence="4">
    <location>
        <position position="199"/>
    </location>
</feature>
<feature type="site" description="Important for efficient shutoff activity" evidence="3">
    <location>
        <position position="202"/>
    </location>
</feature>
<feature type="site" description="Important for efficient shutoff activity" evidence="3">
    <location>
        <position position="203"/>
    </location>
</feature>
<feature type="site" description="Important for efficient shutoff activity" evidence="3">
    <location>
        <position position="206"/>
    </location>
</feature>
<reference key="1">
    <citation type="submission" date="2007-02" db="EMBL/GenBank/DDBJ databases">
        <title>The NIAID influenza genome sequencing project.</title>
        <authorList>
            <person name="Ghedin E."/>
            <person name="Spiro D."/>
            <person name="Miller N."/>
            <person name="Zaborsky J."/>
            <person name="Feldblyum T."/>
            <person name="Subbu V."/>
            <person name="Shumway M."/>
            <person name="Sparenborg J."/>
            <person name="Groveman L."/>
            <person name="Halpin R."/>
            <person name="Sitz J."/>
            <person name="Koo H."/>
            <person name="Salzberg S.L."/>
            <person name="Webster R.G."/>
            <person name="Hoffmann E."/>
            <person name="Krauss S."/>
            <person name="Naeve C."/>
            <person name="Bao Y."/>
            <person name="Bolotov P."/>
            <person name="Dernovoy D."/>
            <person name="Kiryutin B."/>
            <person name="Lipman D.J."/>
            <person name="Tatusova T."/>
        </authorList>
    </citation>
    <scope>NUCLEOTIDE SEQUENCE [GENOMIC RNA]</scope>
</reference>
<reference key="2">
    <citation type="submission" date="2007-02" db="EMBL/GenBank/DDBJ databases">
        <authorList>
            <consortium name="The NIAID Influenza Genome Sequencing Consortium"/>
        </authorList>
    </citation>
    <scope>NUCLEOTIDE SEQUENCE [GENOMIC RNA]</scope>
</reference>
<gene>
    <name type="primary">PA</name>
</gene>
<proteinExistence type="inferred from homology"/>
<comment type="function">
    <text evidence="1 4">Plays a major role in the shutoff of the host protein expression by cleaving mRNAs probably via an endonuclease activity. This host shutoff allows the virus to escape from the host antiviral response (By similarity). Hijacks host RNA splicing machinery to selectively target host RNAs containing introns for destruction. This may explain the preferential degradation of RNAs that have undergone co- or post-transcriptional processing (By similarity).</text>
</comment>
<comment type="subcellular location">
    <subcellularLocation>
        <location evidence="4">Host cytoplasm</location>
    </subcellularLocation>
    <subcellularLocation>
        <location evidence="4">Host nucleus</location>
    </subcellularLocation>
</comment>
<comment type="alternative products">
    <event type="ribosomal frameshifting"/>
    <isoform>
        <id>P0DJW4-1</id>
        <name>PA-X</name>
        <sequence type="displayed"/>
    </isoform>
    <isoform>
        <id>A3DRP7-1</id>
        <name>PA</name>
        <sequence type="external"/>
    </isoform>
</comment>
<comment type="domain">
    <text evidence="1 4">The probable endonuclease active site in the N-terminus and the basic amino acid cluster in the C-terminus are important for the shutoff activity. The C-terminus acts as a nuclear localization signal (By similarity). The C-terminus is recruited to host protein complexes involved in nuclear Pol II RNA processing (By similarity).</text>
</comment>
<comment type="similarity">
    <text evidence="5">Belongs to the influenza viruses PA-X family.</text>
</comment>
<dbReference type="EMBL" id="CY019800">
    <property type="status" value="NOT_ANNOTATED_CDS"/>
    <property type="molecule type" value="Viral_cRNA"/>
</dbReference>
<dbReference type="SMR" id="P0DJW4"/>
<dbReference type="Proteomes" id="UP000007557">
    <property type="component" value="Genome"/>
</dbReference>
<dbReference type="GO" id="GO:0003723">
    <property type="term" value="F:RNA binding"/>
    <property type="evidence" value="ECO:0007669"/>
    <property type="project" value="InterPro"/>
</dbReference>
<dbReference type="GO" id="GO:0039694">
    <property type="term" value="P:viral RNA genome replication"/>
    <property type="evidence" value="ECO:0007669"/>
    <property type="project" value="InterPro"/>
</dbReference>
<dbReference type="GO" id="GO:0075523">
    <property type="term" value="P:viral translational frameshifting"/>
    <property type="evidence" value="ECO:0007669"/>
    <property type="project" value="UniProtKB-KW"/>
</dbReference>
<dbReference type="FunFam" id="3.40.91.90:FF:000001">
    <property type="entry name" value="Polymerase acidic protein"/>
    <property type="match status" value="1"/>
</dbReference>
<dbReference type="Gene3D" id="3.40.91.90">
    <property type="entry name" value="Influenza RNA-dependent RNA polymerase subunit PA, endonuclease domain"/>
    <property type="match status" value="1"/>
</dbReference>
<dbReference type="InterPro" id="IPR001009">
    <property type="entry name" value="PA/PA-X"/>
</dbReference>
<dbReference type="InterPro" id="IPR038372">
    <property type="entry name" value="PA/PA-X_sf"/>
</dbReference>
<dbReference type="Pfam" id="PF00603">
    <property type="entry name" value="Flu_PA"/>
    <property type="match status" value="1"/>
</dbReference>
<protein>
    <recommendedName>
        <fullName>Protein PA-X</fullName>
    </recommendedName>
</protein>